<feature type="chain" id="PRO_0000094693" description="Holliday junction branch migration complex subunit RuvA">
    <location>
        <begin position="1"/>
        <end position="198"/>
    </location>
</feature>
<feature type="region of interest" description="Domain I" evidence="1">
    <location>
        <begin position="1"/>
        <end position="63"/>
    </location>
</feature>
<feature type="region of interest" description="Domain II" evidence="1">
    <location>
        <begin position="64"/>
        <end position="142"/>
    </location>
</feature>
<feature type="region of interest" description="Flexible linker" evidence="1">
    <location>
        <begin position="143"/>
        <end position="147"/>
    </location>
</feature>
<feature type="region of interest" description="Domain III" evidence="1">
    <location>
        <begin position="148"/>
        <end position="198"/>
    </location>
</feature>
<protein>
    <recommendedName>
        <fullName evidence="1">Holliday junction branch migration complex subunit RuvA</fullName>
    </recommendedName>
</protein>
<name>RUVA_STRP1</name>
<keyword id="KW-0963">Cytoplasm</keyword>
<keyword id="KW-0227">DNA damage</keyword>
<keyword id="KW-0233">DNA recombination</keyword>
<keyword id="KW-0234">DNA repair</keyword>
<keyword id="KW-0238">DNA-binding</keyword>
<keyword id="KW-1185">Reference proteome</keyword>
<proteinExistence type="inferred from homology"/>
<comment type="function">
    <text evidence="1">The RuvA-RuvB-RuvC complex processes Holliday junction (HJ) DNA during genetic recombination and DNA repair, while the RuvA-RuvB complex plays an important role in the rescue of blocked DNA replication forks via replication fork reversal (RFR). RuvA specifically binds to HJ cruciform DNA, conferring on it an open structure. The RuvB hexamer acts as an ATP-dependent pump, pulling dsDNA into and through the RuvAB complex. HJ branch migration allows RuvC to scan DNA until it finds its consensus sequence, where it cleaves and resolves the cruciform DNA.</text>
</comment>
<comment type="subunit">
    <text evidence="1">Homotetramer. Forms an RuvA(8)-RuvB(12)-Holliday junction (HJ) complex. HJ DNA is sandwiched between 2 RuvA tetramers; dsDNA enters through RuvA and exits via RuvB. An RuvB hexamer assembles on each DNA strand where it exits the tetramer. Each RuvB hexamer is contacted by two RuvA subunits (via domain III) on 2 adjacent RuvB subunits; this complex drives branch migration. In the full resolvosome a probable DNA-RuvA(4)-RuvB(12)-RuvC(2) complex forms which resolves the HJ.</text>
</comment>
<comment type="subcellular location">
    <subcellularLocation>
        <location evidence="1">Cytoplasm</location>
    </subcellularLocation>
</comment>
<comment type="domain">
    <text evidence="1">Has three domains with a flexible linker between the domains II and III and assumes an 'L' shape. Domain III is highly mobile and contacts RuvB.</text>
</comment>
<comment type="similarity">
    <text evidence="1">Belongs to the RuvA family.</text>
</comment>
<sequence length="198" mass="21879">MYDYIKGQLTKITAKYIVVEANGLGYMINVANPYSFTDSVNQLVTIYLHQVIREDAHLLFGFHTEDEKDVFLKLISVSGIGPTTALAIVAVDDNEGLVNAIDNSDIKYLMKFPKIGKKTAQQMVLDLAGKFVEAPQETGHTKARSNKAGNTQLDEAIEALLALGYKAKELKKIRAFFEGTSETAEQYIKSALKLLMKG</sequence>
<organism>
    <name type="scientific">Streptococcus pyogenes serotype M1</name>
    <dbReference type="NCBI Taxonomy" id="301447"/>
    <lineage>
        <taxon>Bacteria</taxon>
        <taxon>Bacillati</taxon>
        <taxon>Bacillota</taxon>
        <taxon>Bacilli</taxon>
        <taxon>Lactobacillales</taxon>
        <taxon>Streptococcaceae</taxon>
        <taxon>Streptococcus</taxon>
    </lineage>
</organism>
<evidence type="ECO:0000255" key="1">
    <source>
        <dbReference type="HAMAP-Rule" id="MF_00031"/>
    </source>
</evidence>
<dbReference type="EMBL" id="AE004092">
    <property type="protein sequence ID" value="AAK34764.1"/>
    <property type="molecule type" value="Genomic_DNA"/>
</dbReference>
<dbReference type="EMBL" id="CP000017">
    <property type="protein sequence ID" value="AAZ52420.1"/>
    <property type="molecule type" value="Genomic_DNA"/>
</dbReference>
<dbReference type="RefSeq" id="NP_270043.1">
    <property type="nucleotide sequence ID" value="NC_002737.2"/>
</dbReference>
<dbReference type="SMR" id="P66751"/>
<dbReference type="PaxDb" id="1314-HKU360_01916"/>
<dbReference type="KEGG" id="spy:SPy_2119"/>
<dbReference type="KEGG" id="spz:M5005_Spy1802"/>
<dbReference type="PATRIC" id="fig|160490.10.peg.1836"/>
<dbReference type="HOGENOM" id="CLU_087936_1_0_9"/>
<dbReference type="OMA" id="FGFHSEE"/>
<dbReference type="Proteomes" id="UP000000750">
    <property type="component" value="Chromosome"/>
</dbReference>
<dbReference type="GO" id="GO:0005737">
    <property type="term" value="C:cytoplasm"/>
    <property type="evidence" value="ECO:0007669"/>
    <property type="project" value="UniProtKB-SubCell"/>
</dbReference>
<dbReference type="GO" id="GO:0009379">
    <property type="term" value="C:Holliday junction helicase complex"/>
    <property type="evidence" value="ECO:0007669"/>
    <property type="project" value="InterPro"/>
</dbReference>
<dbReference type="GO" id="GO:0048476">
    <property type="term" value="C:Holliday junction resolvase complex"/>
    <property type="evidence" value="ECO:0007669"/>
    <property type="project" value="UniProtKB-UniRule"/>
</dbReference>
<dbReference type="GO" id="GO:0005524">
    <property type="term" value="F:ATP binding"/>
    <property type="evidence" value="ECO:0007669"/>
    <property type="project" value="InterPro"/>
</dbReference>
<dbReference type="GO" id="GO:0000400">
    <property type="term" value="F:four-way junction DNA binding"/>
    <property type="evidence" value="ECO:0007669"/>
    <property type="project" value="UniProtKB-UniRule"/>
</dbReference>
<dbReference type="GO" id="GO:0009378">
    <property type="term" value="F:four-way junction helicase activity"/>
    <property type="evidence" value="ECO:0007669"/>
    <property type="project" value="InterPro"/>
</dbReference>
<dbReference type="GO" id="GO:0006310">
    <property type="term" value="P:DNA recombination"/>
    <property type="evidence" value="ECO:0007669"/>
    <property type="project" value="UniProtKB-UniRule"/>
</dbReference>
<dbReference type="GO" id="GO:0006281">
    <property type="term" value="P:DNA repair"/>
    <property type="evidence" value="ECO:0007669"/>
    <property type="project" value="UniProtKB-UniRule"/>
</dbReference>
<dbReference type="CDD" id="cd14332">
    <property type="entry name" value="UBA_RuvA_C"/>
    <property type="match status" value="1"/>
</dbReference>
<dbReference type="Gene3D" id="1.10.150.20">
    <property type="entry name" value="5' to 3' exonuclease, C-terminal subdomain"/>
    <property type="match status" value="1"/>
</dbReference>
<dbReference type="Gene3D" id="1.10.8.10">
    <property type="entry name" value="DNA helicase RuvA subunit, C-terminal domain"/>
    <property type="match status" value="1"/>
</dbReference>
<dbReference type="Gene3D" id="2.40.50.140">
    <property type="entry name" value="Nucleic acid-binding proteins"/>
    <property type="match status" value="1"/>
</dbReference>
<dbReference type="HAMAP" id="MF_00031">
    <property type="entry name" value="DNA_HJ_migration_RuvA"/>
    <property type="match status" value="1"/>
</dbReference>
<dbReference type="InterPro" id="IPR013849">
    <property type="entry name" value="DNA_helicase_Holl-junc_RuvA_I"/>
</dbReference>
<dbReference type="InterPro" id="IPR003583">
    <property type="entry name" value="Hlx-hairpin-Hlx_DNA-bd_motif"/>
</dbReference>
<dbReference type="InterPro" id="IPR012340">
    <property type="entry name" value="NA-bd_OB-fold"/>
</dbReference>
<dbReference type="InterPro" id="IPR000085">
    <property type="entry name" value="RuvA"/>
</dbReference>
<dbReference type="InterPro" id="IPR010994">
    <property type="entry name" value="RuvA_2-like"/>
</dbReference>
<dbReference type="InterPro" id="IPR011114">
    <property type="entry name" value="RuvA_C"/>
</dbReference>
<dbReference type="InterPro" id="IPR036267">
    <property type="entry name" value="RuvA_C_sf"/>
</dbReference>
<dbReference type="NCBIfam" id="TIGR00084">
    <property type="entry name" value="ruvA"/>
    <property type="match status" value="1"/>
</dbReference>
<dbReference type="Pfam" id="PF14520">
    <property type="entry name" value="HHH_5"/>
    <property type="match status" value="1"/>
</dbReference>
<dbReference type="Pfam" id="PF07499">
    <property type="entry name" value="RuvA_C"/>
    <property type="match status" value="1"/>
</dbReference>
<dbReference type="Pfam" id="PF01330">
    <property type="entry name" value="RuvA_N"/>
    <property type="match status" value="1"/>
</dbReference>
<dbReference type="SMART" id="SM00278">
    <property type="entry name" value="HhH1"/>
    <property type="match status" value="2"/>
</dbReference>
<dbReference type="SUPFAM" id="SSF46929">
    <property type="entry name" value="DNA helicase RuvA subunit, C-terminal domain"/>
    <property type="match status" value="1"/>
</dbReference>
<dbReference type="SUPFAM" id="SSF50249">
    <property type="entry name" value="Nucleic acid-binding proteins"/>
    <property type="match status" value="1"/>
</dbReference>
<dbReference type="SUPFAM" id="SSF47781">
    <property type="entry name" value="RuvA domain 2-like"/>
    <property type="match status" value="1"/>
</dbReference>
<accession>P66751</accession>
<accession>Q48W55</accession>
<accession>Q99XN9</accession>
<gene>
    <name evidence="1" type="primary">ruvA</name>
    <name type="ordered locus">SPy_2119</name>
    <name type="ordered locus">M5005_Spy1802</name>
</gene>
<reference key="1">
    <citation type="journal article" date="2001" name="Proc. Natl. Acad. Sci. U.S.A.">
        <title>Complete genome sequence of an M1 strain of Streptococcus pyogenes.</title>
        <authorList>
            <person name="Ferretti J.J."/>
            <person name="McShan W.M."/>
            <person name="Ajdic D.J."/>
            <person name="Savic D.J."/>
            <person name="Savic G."/>
            <person name="Lyon K."/>
            <person name="Primeaux C."/>
            <person name="Sezate S."/>
            <person name="Suvorov A.N."/>
            <person name="Kenton S."/>
            <person name="Lai H.S."/>
            <person name="Lin S.P."/>
            <person name="Qian Y."/>
            <person name="Jia H.G."/>
            <person name="Najar F.Z."/>
            <person name="Ren Q."/>
            <person name="Zhu H."/>
            <person name="Song L."/>
            <person name="White J."/>
            <person name="Yuan X."/>
            <person name="Clifton S.W."/>
            <person name="Roe B.A."/>
            <person name="McLaughlin R.E."/>
        </authorList>
    </citation>
    <scope>NUCLEOTIDE SEQUENCE [LARGE SCALE GENOMIC DNA]</scope>
    <source>
        <strain>ATCC 700294 / SF370 / Serotype M1</strain>
    </source>
</reference>
<reference key="2">
    <citation type="journal article" date="2005" name="J. Infect. Dis.">
        <title>Evolutionary origin and emergence of a highly successful clone of serotype M1 group A Streptococcus involved multiple horizontal gene transfer events.</title>
        <authorList>
            <person name="Sumby P."/>
            <person name="Porcella S.F."/>
            <person name="Madrigal A.G."/>
            <person name="Barbian K.D."/>
            <person name="Virtaneva K."/>
            <person name="Ricklefs S.M."/>
            <person name="Sturdevant D.E."/>
            <person name="Graham M.R."/>
            <person name="Vuopio-Varkila J."/>
            <person name="Hoe N.P."/>
            <person name="Musser J.M."/>
        </authorList>
    </citation>
    <scope>NUCLEOTIDE SEQUENCE [LARGE SCALE GENOMIC DNA]</scope>
    <source>
        <strain>ATCC BAA-947 / MGAS5005 / Serotype M1</strain>
    </source>
</reference>